<feature type="chain" id="PRO_0000236721" description="Tyrosine--tRNA ligase">
    <location>
        <begin position="1"/>
        <end position="403"/>
    </location>
</feature>
<feature type="domain" description="S4 RNA-binding" evidence="1">
    <location>
        <begin position="341"/>
        <end position="402"/>
    </location>
</feature>
<feature type="short sequence motif" description="'HIGH' region">
    <location>
        <begin position="45"/>
        <end position="54"/>
    </location>
</feature>
<feature type="short sequence motif" description="'KMSKS' region">
    <location>
        <begin position="229"/>
        <end position="233"/>
    </location>
</feature>
<feature type="binding site" evidence="1">
    <location>
        <position position="232"/>
    </location>
    <ligand>
        <name>ATP</name>
        <dbReference type="ChEBI" id="CHEBI:30616"/>
    </ligand>
</feature>
<keyword id="KW-0030">Aminoacyl-tRNA synthetase</keyword>
<keyword id="KW-0067">ATP-binding</keyword>
<keyword id="KW-0963">Cytoplasm</keyword>
<keyword id="KW-0436">Ligase</keyword>
<keyword id="KW-0547">Nucleotide-binding</keyword>
<keyword id="KW-0648">Protein biosynthesis</keyword>
<keyword id="KW-1185">Reference proteome</keyword>
<keyword id="KW-0694">RNA-binding</keyword>
<gene>
    <name evidence="1" type="primary">tyrS</name>
    <name type="ordered locus">GSU1139</name>
</gene>
<reference key="1">
    <citation type="journal article" date="2003" name="Science">
        <title>Genome of Geobacter sulfurreducens: metal reduction in subsurface environments.</title>
        <authorList>
            <person name="Methe B.A."/>
            <person name="Nelson K.E."/>
            <person name="Eisen J.A."/>
            <person name="Paulsen I.T."/>
            <person name="Nelson W.C."/>
            <person name="Heidelberg J.F."/>
            <person name="Wu D."/>
            <person name="Wu M."/>
            <person name="Ward N.L."/>
            <person name="Beanan M.J."/>
            <person name="Dodson R.J."/>
            <person name="Madupu R."/>
            <person name="Brinkac L.M."/>
            <person name="Daugherty S.C."/>
            <person name="DeBoy R.T."/>
            <person name="Durkin A.S."/>
            <person name="Gwinn M.L."/>
            <person name="Kolonay J.F."/>
            <person name="Sullivan S.A."/>
            <person name="Haft D.H."/>
            <person name="Selengut J."/>
            <person name="Davidsen T.M."/>
            <person name="Zafar N."/>
            <person name="White O."/>
            <person name="Tran B."/>
            <person name="Romero C."/>
            <person name="Forberger H.A."/>
            <person name="Weidman J.F."/>
            <person name="Khouri H.M."/>
            <person name="Feldblyum T.V."/>
            <person name="Utterback T.R."/>
            <person name="Van Aken S.E."/>
            <person name="Lovley D.R."/>
            <person name="Fraser C.M."/>
        </authorList>
    </citation>
    <scope>NUCLEOTIDE SEQUENCE [LARGE SCALE GENOMIC DNA]</scope>
    <source>
        <strain>ATCC 51573 / DSM 12127 / PCA</strain>
    </source>
</reference>
<accession>Q74E25</accession>
<proteinExistence type="inferred from homology"/>
<dbReference type="EC" id="6.1.1.1" evidence="1"/>
<dbReference type="EMBL" id="AE017180">
    <property type="protein sequence ID" value="AAR34515.1"/>
    <property type="molecule type" value="Genomic_DNA"/>
</dbReference>
<dbReference type="RefSeq" id="NP_952192.1">
    <property type="nucleotide sequence ID" value="NC_002939.5"/>
</dbReference>
<dbReference type="RefSeq" id="WP_010941800.1">
    <property type="nucleotide sequence ID" value="NC_002939.5"/>
</dbReference>
<dbReference type="SMR" id="Q74E25"/>
<dbReference type="FunCoup" id="Q74E25">
    <property type="interactions" value="567"/>
</dbReference>
<dbReference type="STRING" id="243231.GSU1139"/>
<dbReference type="EnsemblBacteria" id="AAR34515">
    <property type="protein sequence ID" value="AAR34515"/>
    <property type="gene ID" value="GSU1139"/>
</dbReference>
<dbReference type="KEGG" id="gsu:GSU1139"/>
<dbReference type="PATRIC" id="fig|243231.5.peg.1134"/>
<dbReference type="eggNOG" id="COG0162">
    <property type="taxonomic scope" value="Bacteria"/>
</dbReference>
<dbReference type="HOGENOM" id="CLU_024003_5_0_7"/>
<dbReference type="InParanoid" id="Q74E25"/>
<dbReference type="OrthoDB" id="9804243at2"/>
<dbReference type="Proteomes" id="UP000000577">
    <property type="component" value="Chromosome"/>
</dbReference>
<dbReference type="GO" id="GO:0005829">
    <property type="term" value="C:cytosol"/>
    <property type="evidence" value="ECO:0000318"/>
    <property type="project" value="GO_Central"/>
</dbReference>
<dbReference type="GO" id="GO:0005524">
    <property type="term" value="F:ATP binding"/>
    <property type="evidence" value="ECO:0007669"/>
    <property type="project" value="UniProtKB-UniRule"/>
</dbReference>
<dbReference type="GO" id="GO:0003723">
    <property type="term" value="F:RNA binding"/>
    <property type="evidence" value="ECO:0007669"/>
    <property type="project" value="UniProtKB-KW"/>
</dbReference>
<dbReference type="GO" id="GO:0004831">
    <property type="term" value="F:tyrosine-tRNA ligase activity"/>
    <property type="evidence" value="ECO:0000318"/>
    <property type="project" value="GO_Central"/>
</dbReference>
<dbReference type="GO" id="GO:0043039">
    <property type="term" value="P:tRNA aminoacylation"/>
    <property type="evidence" value="ECO:0000318"/>
    <property type="project" value="GO_Central"/>
</dbReference>
<dbReference type="GO" id="GO:0006437">
    <property type="term" value="P:tyrosyl-tRNA aminoacylation"/>
    <property type="evidence" value="ECO:0007669"/>
    <property type="project" value="UniProtKB-UniRule"/>
</dbReference>
<dbReference type="CDD" id="cd00165">
    <property type="entry name" value="S4"/>
    <property type="match status" value="1"/>
</dbReference>
<dbReference type="CDD" id="cd00805">
    <property type="entry name" value="TyrRS_core"/>
    <property type="match status" value="1"/>
</dbReference>
<dbReference type="FunFam" id="1.10.240.10:FF:000006">
    <property type="entry name" value="Tyrosine--tRNA ligase"/>
    <property type="match status" value="1"/>
</dbReference>
<dbReference type="FunFam" id="3.10.290.10:FF:000022">
    <property type="entry name" value="Tyrosine--tRNA ligase"/>
    <property type="match status" value="1"/>
</dbReference>
<dbReference type="FunFam" id="3.40.50.620:FF:000061">
    <property type="entry name" value="Tyrosine--tRNA ligase"/>
    <property type="match status" value="1"/>
</dbReference>
<dbReference type="Gene3D" id="3.40.50.620">
    <property type="entry name" value="HUPs"/>
    <property type="match status" value="1"/>
</dbReference>
<dbReference type="Gene3D" id="3.10.290.10">
    <property type="entry name" value="RNA-binding S4 domain"/>
    <property type="match status" value="1"/>
</dbReference>
<dbReference type="Gene3D" id="1.10.240.10">
    <property type="entry name" value="Tyrosyl-Transfer RNA Synthetase"/>
    <property type="match status" value="1"/>
</dbReference>
<dbReference type="HAMAP" id="MF_02007">
    <property type="entry name" value="Tyr_tRNA_synth_type2"/>
    <property type="match status" value="1"/>
</dbReference>
<dbReference type="InterPro" id="IPR001412">
    <property type="entry name" value="aa-tRNA-synth_I_CS"/>
</dbReference>
<dbReference type="InterPro" id="IPR002305">
    <property type="entry name" value="aa-tRNA-synth_Ic"/>
</dbReference>
<dbReference type="InterPro" id="IPR014729">
    <property type="entry name" value="Rossmann-like_a/b/a_fold"/>
</dbReference>
<dbReference type="InterPro" id="IPR002942">
    <property type="entry name" value="S4_RNA-bd"/>
</dbReference>
<dbReference type="InterPro" id="IPR036986">
    <property type="entry name" value="S4_RNA-bd_sf"/>
</dbReference>
<dbReference type="InterPro" id="IPR054608">
    <property type="entry name" value="SYY-like_C"/>
</dbReference>
<dbReference type="InterPro" id="IPR002307">
    <property type="entry name" value="Tyr-tRNA-ligase"/>
</dbReference>
<dbReference type="InterPro" id="IPR024088">
    <property type="entry name" value="Tyr-tRNA-ligase_bac-type"/>
</dbReference>
<dbReference type="InterPro" id="IPR024108">
    <property type="entry name" value="Tyr-tRNA-ligase_bac_2"/>
</dbReference>
<dbReference type="NCBIfam" id="TIGR00234">
    <property type="entry name" value="tyrS"/>
    <property type="match status" value="1"/>
</dbReference>
<dbReference type="PANTHER" id="PTHR11766:SF1">
    <property type="entry name" value="TYROSINE--TRNA LIGASE"/>
    <property type="match status" value="1"/>
</dbReference>
<dbReference type="PANTHER" id="PTHR11766">
    <property type="entry name" value="TYROSYL-TRNA SYNTHETASE"/>
    <property type="match status" value="1"/>
</dbReference>
<dbReference type="Pfam" id="PF22421">
    <property type="entry name" value="SYY_C-terminal"/>
    <property type="match status" value="1"/>
</dbReference>
<dbReference type="Pfam" id="PF00579">
    <property type="entry name" value="tRNA-synt_1b"/>
    <property type="match status" value="1"/>
</dbReference>
<dbReference type="PRINTS" id="PR01040">
    <property type="entry name" value="TRNASYNTHTYR"/>
</dbReference>
<dbReference type="SMART" id="SM00363">
    <property type="entry name" value="S4"/>
    <property type="match status" value="1"/>
</dbReference>
<dbReference type="SUPFAM" id="SSF55174">
    <property type="entry name" value="Alpha-L RNA-binding motif"/>
    <property type="match status" value="1"/>
</dbReference>
<dbReference type="SUPFAM" id="SSF52374">
    <property type="entry name" value="Nucleotidylyl transferase"/>
    <property type="match status" value="1"/>
</dbReference>
<dbReference type="PROSITE" id="PS00178">
    <property type="entry name" value="AA_TRNA_LIGASE_I"/>
    <property type="match status" value="1"/>
</dbReference>
<dbReference type="PROSITE" id="PS50889">
    <property type="entry name" value="S4"/>
    <property type="match status" value="1"/>
</dbReference>
<name>SYY_GEOSL</name>
<sequence length="403" mass="44771">MSVADQMALIKRGAVEILVEKELEEKLEKSAKTGVPLKIKAGFDPTAPDLHLGHTVLLHKMRQFQQLGHEVIFLIGDFTGMIGDPTGKSETRKALSREDVLRNAETYKEQVFKILDPEKTRVAFNSEWLAKLDAGGMIGLAAKYTVARMLERDDFGKRFANQLPISIHEFLYPLIQGYDSVALQADVELGGTDQKFNLLVGRELQREWGQTPQTVITMPLLEGLDGVNKMSKSLGNYIGINEPADEIFGKIMSISDELMLRYYELLSDLSMAEIDGMRTGIRDGSVHPMEAKKQLGREVVARYHGAAAATDAEEHFVKRFRDNQTPDEMPELTLAATDEKVALCRLLAEAGLVKSNSEGRRAIQQGGVKVNGEKVSDESLELAATGVYVIQFGKRRFARITFA</sequence>
<evidence type="ECO:0000255" key="1">
    <source>
        <dbReference type="HAMAP-Rule" id="MF_02007"/>
    </source>
</evidence>
<protein>
    <recommendedName>
        <fullName evidence="1">Tyrosine--tRNA ligase</fullName>
        <ecNumber evidence="1">6.1.1.1</ecNumber>
    </recommendedName>
    <alternativeName>
        <fullName evidence="1">Tyrosyl-tRNA synthetase</fullName>
        <shortName evidence="1">TyrRS</shortName>
    </alternativeName>
</protein>
<comment type="function">
    <text evidence="1">Catalyzes the attachment of tyrosine to tRNA(Tyr) in a two-step reaction: tyrosine is first activated by ATP to form Tyr-AMP and then transferred to the acceptor end of tRNA(Tyr).</text>
</comment>
<comment type="catalytic activity">
    <reaction evidence="1">
        <text>tRNA(Tyr) + L-tyrosine + ATP = L-tyrosyl-tRNA(Tyr) + AMP + diphosphate + H(+)</text>
        <dbReference type="Rhea" id="RHEA:10220"/>
        <dbReference type="Rhea" id="RHEA-COMP:9706"/>
        <dbReference type="Rhea" id="RHEA-COMP:9707"/>
        <dbReference type="ChEBI" id="CHEBI:15378"/>
        <dbReference type="ChEBI" id="CHEBI:30616"/>
        <dbReference type="ChEBI" id="CHEBI:33019"/>
        <dbReference type="ChEBI" id="CHEBI:58315"/>
        <dbReference type="ChEBI" id="CHEBI:78442"/>
        <dbReference type="ChEBI" id="CHEBI:78536"/>
        <dbReference type="ChEBI" id="CHEBI:456215"/>
        <dbReference type="EC" id="6.1.1.1"/>
    </reaction>
</comment>
<comment type="subunit">
    <text evidence="1">Homodimer.</text>
</comment>
<comment type="subcellular location">
    <subcellularLocation>
        <location evidence="1">Cytoplasm</location>
    </subcellularLocation>
</comment>
<comment type="similarity">
    <text evidence="1">Belongs to the class-I aminoacyl-tRNA synthetase family. TyrS type 2 subfamily.</text>
</comment>
<organism>
    <name type="scientific">Geobacter sulfurreducens (strain ATCC 51573 / DSM 12127 / PCA)</name>
    <dbReference type="NCBI Taxonomy" id="243231"/>
    <lineage>
        <taxon>Bacteria</taxon>
        <taxon>Pseudomonadati</taxon>
        <taxon>Thermodesulfobacteriota</taxon>
        <taxon>Desulfuromonadia</taxon>
        <taxon>Geobacterales</taxon>
        <taxon>Geobacteraceae</taxon>
        <taxon>Geobacter</taxon>
    </lineage>
</organism>